<gene>
    <name evidence="1" type="primary">smpB</name>
    <name type="ordered locus">Dhaf_4712</name>
</gene>
<protein>
    <recommendedName>
        <fullName evidence="1">SsrA-binding protein</fullName>
    </recommendedName>
    <alternativeName>
        <fullName evidence="1">Small protein B</fullName>
    </alternativeName>
</protein>
<comment type="function">
    <text evidence="1">Required for rescue of stalled ribosomes mediated by trans-translation. Binds to transfer-messenger RNA (tmRNA), required for stable association of tmRNA with ribosomes. tmRNA and SmpB together mimic tRNA shape, replacing the anticodon stem-loop with SmpB. tmRNA is encoded by the ssrA gene; the 2 termini fold to resemble tRNA(Ala) and it encodes a 'tag peptide', a short internal open reading frame. During trans-translation Ala-aminoacylated tmRNA acts like a tRNA, entering the A-site of stalled ribosomes, displacing the stalled mRNA. The ribosome then switches to translate the ORF on the tmRNA; the nascent peptide is terminated with the 'tag peptide' encoded by the tmRNA and targeted for degradation. The ribosome is freed to recommence translation, which seems to be the essential function of trans-translation.</text>
</comment>
<comment type="subcellular location">
    <subcellularLocation>
        <location evidence="1">Cytoplasm</location>
    </subcellularLocation>
    <text evidence="1">The tmRNA-SmpB complex associates with stalled 70S ribosomes.</text>
</comment>
<comment type="similarity">
    <text evidence="1">Belongs to the SmpB family.</text>
</comment>
<dbReference type="EMBL" id="CP001336">
    <property type="protein sequence ID" value="ACL22707.1"/>
    <property type="molecule type" value="Genomic_DNA"/>
</dbReference>
<dbReference type="RefSeq" id="WP_005815658.1">
    <property type="nucleotide sequence ID" value="NC_011830.1"/>
</dbReference>
<dbReference type="SMR" id="B8FXV6"/>
<dbReference type="KEGG" id="dhd:Dhaf_4712"/>
<dbReference type="HOGENOM" id="CLU_108953_0_0_9"/>
<dbReference type="Proteomes" id="UP000007726">
    <property type="component" value="Chromosome"/>
</dbReference>
<dbReference type="GO" id="GO:0005829">
    <property type="term" value="C:cytosol"/>
    <property type="evidence" value="ECO:0007669"/>
    <property type="project" value="TreeGrafter"/>
</dbReference>
<dbReference type="GO" id="GO:0003723">
    <property type="term" value="F:RNA binding"/>
    <property type="evidence" value="ECO:0007669"/>
    <property type="project" value="UniProtKB-UniRule"/>
</dbReference>
<dbReference type="GO" id="GO:0070929">
    <property type="term" value="P:trans-translation"/>
    <property type="evidence" value="ECO:0007669"/>
    <property type="project" value="UniProtKB-UniRule"/>
</dbReference>
<dbReference type="CDD" id="cd09294">
    <property type="entry name" value="SmpB"/>
    <property type="match status" value="1"/>
</dbReference>
<dbReference type="Gene3D" id="2.40.280.10">
    <property type="match status" value="1"/>
</dbReference>
<dbReference type="HAMAP" id="MF_00023">
    <property type="entry name" value="SmpB"/>
    <property type="match status" value="1"/>
</dbReference>
<dbReference type="InterPro" id="IPR023620">
    <property type="entry name" value="SmpB"/>
</dbReference>
<dbReference type="InterPro" id="IPR000037">
    <property type="entry name" value="SsrA-bd_prot"/>
</dbReference>
<dbReference type="InterPro" id="IPR020081">
    <property type="entry name" value="SsrA-bd_prot_CS"/>
</dbReference>
<dbReference type="NCBIfam" id="NF003843">
    <property type="entry name" value="PRK05422.1"/>
    <property type="match status" value="1"/>
</dbReference>
<dbReference type="NCBIfam" id="TIGR00086">
    <property type="entry name" value="smpB"/>
    <property type="match status" value="1"/>
</dbReference>
<dbReference type="PANTHER" id="PTHR30308:SF2">
    <property type="entry name" value="SSRA-BINDING PROTEIN"/>
    <property type="match status" value="1"/>
</dbReference>
<dbReference type="PANTHER" id="PTHR30308">
    <property type="entry name" value="TMRNA-BINDING COMPONENT OF TRANS-TRANSLATION TAGGING COMPLEX"/>
    <property type="match status" value="1"/>
</dbReference>
<dbReference type="Pfam" id="PF01668">
    <property type="entry name" value="SmpB"/>
    <property type="match status" value="1"/>
</dbReference>
<dbReference type="SUPFAM" id="SSF74982">
    <property type="entry name" value="Small protein B (SmpB)"/>
    <property type="match status" value="1"/>
</dbReference>
<dbReference type="PROSITE" id="PS01317">
    <property type="entry name" value="SSRP"/>
    <property type="match status" value="1"/>
</dbReference>
<keyword id="KW-0963">Cytoplasm</keyword>
<keyword id="KW-0694">RNA-binding</keyword>
<accession>B8FXV6</accession>
<name>SSRP_DESHD</name>
<organism>
    <name type="scientific">Desulfitobacterium hafniense (strain DSM 10664 / DCB-2)</name>
    <dbReference type="NCBI Taxonomy" id="272564"/>
    <lineage>
        <taxon>Bacteria</taxon>
        <taxon>Bacillati</taxon>
        <taxon>Bacillota</taxon>
        <taxon>Clostridia</taxon>
        <taxon>Eubacteriales</taxon>
        <taxon>Desulfitobacteriaceae</taxon>
        <taxon>Desulfitobacterium</taxon>
    </lineage>
</organism>
<feature type="chain" id="PRO_1000116860" description="SsrA-binding protein">
    <location>
        <begin position="1"/>
        <end position="156"/>
    </location>
</feature>
<evidence type="ECO:0000255" key="1">
    <source>
        <dbReference type="HAMAP-Rule" id="MF_00023"/>
    </source>
</evidence>
<reference key="1">
    <citation type="journal article" date="2012" name="BMC Microbiol.">
        <title>Genome sequence of Desulfitobacterium hafniense DCB-2, a Gram-positive anaerobe capable of dehalogenation and metal reduction.</title>
        <authorList>
            <person name="Kim S.H."/>
            <person name="Harzman C."/>
            <person name="Davis J.K."/>
            <person name="Hutcheson R."/>
            <person name="Broderick J.B."/>
            <person name="Marsh T.L."/>
            <person name="Tiedje J.M."/>
        </authorList>
    </citation>
    <scope>NUCLEOTIDE SEQUENCE [LARGE SCALE GENOMIC DNA]</scope>
    <source>
        <strain>DSM 10664 / DCB-2</strain>
    </source>
</reference>
<sequence>MASEGIKVISDNRKAYHDYFVEEKLEAGVILTGTEIKSIRNGRVNLKDSYARIENGEVWLYQLHISPYEQGNRFNHDPLRKRKLLLNRSEIIKLVGKVQQQGLTLIPTKIYLKRGLAKIELGVCRGKKNYDKRQDIAERDAKREIERHFRDQGKGY</sequence>
<proteinExistence type="inferred from homology"/>